<gene>
    <name evidence="1" type="primary">ycgL</name>
    <name type="ordered locus">ECIAI39_1894</name>
</gene>
<dbReference type="EMBL" id="CU928164">
    <property type="protein sequence ID" value="CAR18025.1"/>
    <property type="molecule type" value="Genomic_DNA"/>
</dbReference>
<dbReference type="RefSeq" id="YP_002407871.1">
    <property type="nucleotide sequence ID" value="NC_011750.1"/>
</dbReference>
<dbReference type="SMR" id="B7NJG3"/>
<dbReference type="STRING" id="585057.ECIAI39_1894"/>
<dbReference type="KEGG" id="ect:ECIAI39_1894"/>
<dbReference type="PATRIC" id="fig|585057.6.peg.1971"/>
<dbReference type="HOGENOM" id="CLU_155118_1_0_6"/>
<dbReference type="Proteomes" id="UP000000749">
    <property type="component" value="Chromosome"/>
</dbReference>
<dbReference type="Gene3D" id="3.10.510.20">
    <property type="entry name" value="YcgL domain"/>
    <property type="match status" value="1"/>
</dbReference>
<dbReference type="HAMAP" id="MF_01866">
    <property type="entry name" value="UPF0745"/>
    <property type="match status" value="1"/>
</dbReference>
<dbReference type="InterPro" id="IPR038068">
    <property type="entry name" value="YcgL-like_sf"/>
</dbReference>
<dbReference type="InterPro" id="IPR027354">
    <property type="entry name" value="YcgL_dom"/>
</dbReference>
<dbReference type="PANTHER" id="PTHR38109">
    <property type="entry name" value="PROTEIN YCGL"/>
    <property type="match status" value="1"/>
</dbReference>
<dbReference type="PANTHER" id="PTHR38109:SF1">
    <property type="entry name" value="PROTEIN YCGL"/>
    <property type="match status" value="1"/>
</dbReference>
<dbReference type="Pfam" id="PF05166">
    <property type="entry name" value="YcgL"/>
    <property type="match status" value="1"/>
</dbReference>
<dbReference type="SUPFAM" id="SSF160191">
    <property type="entry name" value="YcgL-like"/>
    <property type="match status" value="1"/>
</dbReference>
<dbReference type="PROSITE" id="PS51648">
    <property type="entry name" value="YCGL"/>
    <property type="match status" value="1"/>
</dbReference>
<proteinExistence type="inferred from homology"/>
<sequence length="108" mass="12415">MPKPGILKSKSMFCVIYRSSKRDQTYLYVEKKDDFSRVPEELMKGFGQPQLAMILPLDGRKKLVNADIEKVKQALTEQGYYLQLPPPPEDLLKQHLSVMGQKTDDTNK</sequence>
<feature type="chain" id="PRO_0000375302" description="Protein YcgL">
    <location>
        <begin position="1"/>
        <end position="108"/>
    </location>
</feature>
<feature type="domain" description="YcgL" evidence="1">
    <location>
        <begin position="12"/>
        <end position="96"/>
    </location>
</feature>
<accession>B7NJG3</accession>
<protein>
    <recommendedName>
        <fullName evidence="1">Protein YcgL</fullName>
    </recommendedName>
</protein>
<organism>
    <name type="scientific">Escherichia coli O7:K1 (strain IAI39 / ExPEC)</name>
    <dbReference type="NCBI Taxonomy" id="585057"/>
    <lineage>
        <taxon>Bacteria</taxon>
        <taxon>Pseudomonadati</taxon>
        <taxon>Pseudomonadota</taxon>
        <taxon>Gammaproteobacteria</taxon>
        <taxon>Enterobacterales</taxon>
        <taxon>Enterobacteriaceae</taxon>
        <taxon>Escherichia</taxon>
    </lineage>
</organism>
<evidence type="ECO:0000255" key="1">
    <source>
        <dbReference type="HAMAP-Rule" id="MF_01866"/>
    </source>
</evidence>
<reference key="1">
    <citation type="journal article" date="2009" name="PLoS Genet.">
        <title>Organised genome dynamics in the Escherichia coli species results in highly diverse adaptive paths.</title>
        <authorList>
            <person name="Touchon M."/>
            <person name="Hoede C."/>
            <person name="Tenaillon O."/>
            <person name="Barbe V."/>
            <person name="Baeriswyl S."/>
            <person name="Bidet P."/>
            <person name="Bingen E."/>
            <person name="Bonacorsi S."/>
            <person name="Bouchier C."/>
            <person name="Bouvet O."/>
            <person name="Calteau A."/>
            <person name="Chiapello H."/>
            <person name="Clermont O."/>
            <person name="Cruveiller S."/>
            <person name="Danchin A."/>
            <person name="Diard M."/>
            <person name="Dossat C."/>
            <person name="Karoui M.E."/>
            <person name="Frapy E."/>
            <person name="Garry L."/>
            <person name="Ghigo J.M."/>
            <person name="Gilles A.M."/>
            <person name="Johnson J."/>
            <person name="Le Bouguenec C."/>
            <person name="Lescat M."/>
            <person name="Mangenot S."/>
            <person name="Martinez-Jehanne V."/>
            <person name="Matic I."/>
            <person name="Nassif X."/>
            <person name="Oztas S."/>
            <person name="Petit M.A."/>
            <person name="Pichon C."/>
            <person name="Rouy Z."/>
            <person name="Ruf C.S."/>
            <person name="Schneider D."/>
            <person name="Tourret J."/>
            <person name="Vacherie B."/>
            <person name="Vallenet D."/>
            <person name="Medigue C."/>
            <person name="Rocha E.P.C."/>
            <person name="Denamur E."/>
        </authorList>
    </citation>
    <scope>NUCLEOTIDE SEQUENCE [LARGE SCALE GENOMIC DNA]</scope>
    <source>
        <strain>IAI39 / ExPEC</strain>
    </source>
</reference>
<name>YCGL_ECO7I</name>